<organism>
    <name type="scientific">Streptococcus pneumoniae (strain P1031)</name>
    <dbReference type="NCBI Taxonomy" id="488223"/>
    <lineage>
        <taxon>Bacteria</taxon>
        <taxon>Bacillati</taxon>
        <taxon>Bacillota</taxon>
        <taxon>Bacilli</taxon>
        <taxon>Lactobacillales</taxon>
        <taxon>Streptococcaceae</taxon>
        <taxon>Streptococcus</taxon>
    </lineage>
</organism>
<feature type="chain" id="PRO_1000148257" description="Phosphopentomutase">
    <location>
        <begin position="1"/>
        <end position="403"/>
    </location>
</feature>
<feature type="binding site" evidence="1">
    <location>
        <position position="13"/>
    </location>
    <ligand>
        <name>Mn(2+)</name>
        <dbReference type="ChEBI" id="CHEBI:29035"/>
        <label>1</label>
    </ligand>
</feature>
<feature type="binding site" evidence="1">
    <location>
        <position position="298"/>
    </location>
    <ligand>
        <name>Mn(2+)</name>
        <dbReference type="ChEBI" id="CHEBI:29035"/>
        <label>2</label>
    </ligand>
</feature>
<feature type="binding site" evidence="1">
    <location>
        <position position="303"/>
    </location>
    <ligand>
        <name>Mn(2+)</name>
        <dbReference type="ChEBI" id="CHEBI:29035"/>
        <label>2</label>
    </ligand>
</feature>
<feature type="binding site" evidence="1">
    <location>
        <position position="339"/>
    </location>
    <ligand>
        <name>Mn(2+)</name>
        <dbReference type="ChEBI" id="CHEBI:29035"/>
        <label>1</label>
    </ligand>
</feature>
<feature type="binding site" evidence="1">
    <location>
        <position position="340"/>
    </location>
    <ligand>
        <name>Mn(2+)</name>
        <dbReference type="ChEBI" id="CHEBI:29035"/>
        <label>1</label>
    </ligand>
</feature>
<feature type="binding site" evidence="1">
    <location>
        <position position="351"/>
    </location>
    <ligand>
        <name>Mn(2+)</name>
        <dbReference type="ChEBI" id="CHEBI:29035"/>
        <label>2</label>
    </ligand>
</feature>
<evidence type="ECO:0000255" key="1">
    <source>
        <dbReference type="HAMAP-Rule" id="MF_00740"/>
    </source>
</evidence>
<proteinExistence type="inferred from homology"/>
<dbReference type="EC" id="5.4.2.7" evidence="1"/>
<dbReference type="EMBL" id="CP000920">
    <property type="protein sequence ID" value="ACO20221.1"/>
    <property type="molecule type" value="Genomic_DNA"/>
</dbReference>
<dbReference type="RefSeq" id="WP_000033102.1">
    <property type="nucleotide sequence ID" value="NC_012467.1"/>
</dbReference>
<dbReference type="SMR" id="C1CJR8"/>
<dbReference type="KEGG" id="spp:SPP_0835"/>
<dbReference type="HOGENOM" id="CLU_053861_0_0_9"/>
<dbReference type="UniPathway" id="UPA00002">
    <property type="reaction ID" value="UER00467"/>
</dbReference>
<dbReference type="GO" id="GO:0005829">
    <property type="term" value="C:cytosol"/>
    <property type="evidence" value="ECO:0007669"/>
    <property type="project" value="TreeGrafter"/>
</dbReference>
<dbReference type="GO" id="GO:0000287">
    <property type="term" value="F:magnesium ion binding"/>
    <property type="evidence" value="ECO:0007669"/>
    <property type="project" value="InterPro"/>
</dbReference>
<dbReference type="GO" id="GO:0030145">
    <property type="term" value="F:manganese ion binding"/>
    <property type="evidence" value="ECO:0007669"/>
    <property type="project" value="UniProtKB-UniRule"/>
</dbReference>
<dbReference type="GO" id="GO:0008973">
    <property type="term" value="F:phosphopentomutase activity"/>
    <property type="evidence" value="ECO:0007669"/>
    <property type="project" value="UniProtKB-UniRule"/>
</dbReference>
<dbReference type="GO" id="GO:0006018">
    <property type="term" value="P:2-deoxyribose 1-phosphate catabolic process"/>
    <property type="evidence" value="ECO:0007669"/>
    <property type="project" value="UniProtKB-UniRule"/>
</dbReference>
<dbReference type="GO" id="GO:0006015">
    <property type="term" value="P:5-phosphoribose 1-diphosphate biosynthetic process"/>
    <property type="evidence" value="ECO:0007669"/>
    <property type="project" value="UniProtKB-UniPathway"/>
</dbReference>
<dbReference type="GO" id="GO:0043094">
    <property type="term" value="P:metabolic compound salvage"/>
    <property type="evidence" value="ECO:0007669"/>
    <property type="project" value="InterPro"/>
</dbReference>
<dbReference type="GO" id="GO:0009117">
    <property type="term" value="P:nucleotide metabolic process"/>
    <property type="evidence" value="ECO:0007669"/>
    <property type="project" value="InterPro"/>
</dbReference>
<dbReference type="CDD" id="cd16009">
    <property type="entry name" value="PPM"/>
    <property type="match status" value="1"/>
</dbReference>
<dbReference type="FunFam" id="3.30.70.1250:FF:000001">
    <property type="entry name" value="Phosphopentomutase"/>
    <property type="match status" value="1"/>
</dbReference>
<dbReference type="Gene3D" id="3.40.720.10">
    <property type="entry name" value="Alkaline Phosphatase, subunit A"/>
    <property type="match status" value="1"/>
</dbReference>
<dbReference type="Gene3D" id="3.30.70.1250">
    <property type="entry name" value="Phosphopentomutase"/>
    <property type="match status" value="1"/>
</dbReference>
<dbReference type="HAMAP" id="MF_00740">
    <property type="entry name" value="Phosphopentomut"/>
    <property type="match status" value="1"/>
</dbReference>
<dbReference type="InterPro" id="IPR017850">
    <property type="entry name" value="Alkaline_phosphatase_core_sf"/>
</dbReference>
<dbReference type="InterPro" id="IPR010045">
    <property type="entry name" value="DeoB"/>
</dbReference>
<dbReference type="InterPro" id="IPR006124">
    <property type="entry name" value="Metalloenzyme"/>
</dbReference>
<dbReference type="InterPro" id="IPR024052">
    <property type="entry name" value="Phosphopentomutase_DeoB_cap_sf"/>
</dbReference>
<dbReference type="NCBIfam" id="TIGR01696">
    <property type="entry name" value="deoB"/>
    <property type="match status" value="1"/>
</dbReference>
<dbReference type="NCBIfam" id="NF003766">
    <property type="entry name" value="PRK05362.1"/>
    <property type="match status" value="1"/>
</dbReference>
<dbReference type="PANTHER" id="PTHR21110">
    <property type="entry name" value="PHOSPHOPENTOMUTASE"/>
    <property type="match status" value="1"/>
</dbReference>
<dbReference type="PANTHER" id="PTHR21110:SF0">
    <property type="entry name" value="PHOSPHOPENTOMUTASE"/>
    <property type="match status" value="1"/>
</dbReference>
<dbReference type="Pfam" id="PF01676">
    <property type="entry name" value="Metalloenzyme"/>
    <property type="match status" value="1"/>
</dbReference>
<dbReference type="PIRSF" id="PIRSF001491">
    <property type="entry name" value="Ppentomutase"/>
    <property type="match status" value="1"/>
</dbReference>
<dbReference type="SUPFAM" id="SSF53649">
    <property type="entry name" value="Alkaline phosphatase-like"/>
    <property type="match status" value="1"/>
</dbReference>
<dbReference type="SUPFAM" id="SSF143856">
    <property type="entry name" value="DeoB insert domain-like"/>
    <property type="match status" value="1"/>
</dbReference>
<keyword id="KW-0963">Cytoplasm</keyword>
<keyword id="KW-0413">Isomerase</keyword>
<keyword id="KW-0464">Manganese</keyword>
<keyword id="KW-0479">Metal-binding</keyword>
<protein>
    <recommendedName>
        <fullName evidence="1">Phosphopentomutase</fullName>
        <ecNumber evidence="1">5.4.2.7</ecNumber>
    </recommendedName>
    <alternativeName>
        <fullName evidence="1">Phosphodeoxyribomutase</fullName>
    </alternativeName>
</protein>
<reference key="1">
    <citation type="journal article" date="2010" name="Genome Biol.">
        <title>Structure and dynamics of the pan-genome of Streptococcus pneumoniae and closely related species.</title>
        <authorList>
            <person name="Donati C."/>
            <person name="Hiller N.L."/>
            <person name="Tettelin H."/>
            <person name="Muzzi A."/>
            <person name="Croucher N.J."/>
            <person name="Angiuoli S.V."/>
            <person name="Oggioni M."/>
            <person name="Dunning Hotopp J.C."/>
            <person name="Hu F.Z."/>
            <person name="Riley D.R."/>
            <person name="Covacci A."/>
            <person name="Mitchell T.J."/>
            <person name="Bentley S.D."/>
            <person name="Kilian M."/>
            <person name="Ehrlich G.D."/>
            <person name="Rappuoli R."/>
            <person name="Moxon E.R."/>
            <person name="Masignani V."/>
        </authorList>
    </citation>
    <scope>NUCLEOTIDE SEQUENCE [LARGE SCALE GENOMIC DNA]</scope>
    <source>
        <strain>P1031</strain>
    </source>
</reference>
<accession>C1CJR8</accession>
<comment type="function">
    <text evidence="1">Isomerase that catalyzes the conversion of deoxy-ribose 1-phosphate (dRib-1-P) and ribose 1-phosphate (Rib-1-P) to deoxy-ribose 5-phosphate (dRib-5-P) and ribose 5-phosphate (Rib-5-P), respectively.</text>
</comment>
<comment type="catalytic activity">
    <reaction evidence="1">
        <text>2-deoxy-alpha-D-ribose 1-phosphate = 2-deoxy-D-ribose 5-phosphate</text>
        <dbReference type="Rhea" id="RHEA:27658"/>
        <dbReference type="ChEBI" id="CHEBI:57259"/>
        <dbReference type="ChEBI" id="CHEBI:62877"/>
        <dbReference type="EC" id="5.4.2.7"/>
    </reaction>
</comment>
<comment type="catalytic activity">
    <reaction evidence="1">
        <text>alpha-D-ribose 1-phosphate = D-ribose 5-phosphate</text>
        <dbReference type="Rhea" id="RHEA:18793"/>
        <dbReference type="ChEBI" id="CHEBI:57720"/>
        <dbReference type="ChEBI" id="CHEBI:78346"/>
        <dbReference type="EC" id="5.4.2.7"/>
    </reaction>
</comment>
<comment type="cofactor">
    <cofactor evidence="1">
        <name>Mn(2+)</name>
        <dbReference type="ChEBI" id="CHEBI:29035"/>
    </cofactor>
    <text evidence="1">Binds 2 manganese ions.</text>
</comment>
<comment type="pathway">
    <text evidence="1">Carbohydrate degradation; 2-deoxy-D-ribose 1-phosphate degradation; D-glyceraldehyde 3-phosphate and acetaldehyde from 2-deoxy-alpha-D-ribose 1-phosphate: step 1/2.</text>
</comment>
<comment type="subcellular location">
    <subcellularLocation>
        <location evidence="1">Cytoplasm</location>
    </subcellularLocation>
</comment>
<comment type="similarity">
    <text evidence="1">Belongs to the phosphopentomutase family.</text>
</comment>
<sequence>MSKFNRIHLVVLDSVGIGAAPDANNFVNAGVPDGASDTLGHISKTVGLNVPNMAKIGLGNIPRETPLKTVAAESNPTGYATKLEEVSLGKDTMTGHWEIMGLNITEPFDTFWNGFPEEILTKIEEFSGRKVIREANKPYSGTAVIDDFGPRQMETGELIIYTSADPVLQIAAHEDIIPLDELYRICEYARSITLERPALLGRIIARPYVGEPGNFTRTANRRDLAVSPFSPTVLDKLNEAGIDTYAVGKINDIFNGAGINHDMGHNKSNSHGIDTLLKTMGLAEFEKGFSFTNLVDFDALYGHRRNAHGYRDCLHEFDERLPEIIAAMRENDLLLITADHGNDPTYAGTDHTREYIPLLAYSPAFKGNGLIPVGHFADISATVADNFGVETAMIGESFLDKLV</sequence>
<name>DEOB_STRZP</name>
<gene>
    <name evidence="1" type="primary">deoB</name>
    <name type="ordered locus">SPP_0835</name>
</gene>